<reference key="1">
    <citation type="journal article" date="2003" name="Nucleic Acids Res.">
        <title>The complete genome sequence and analysis of Corynebacterium diphtheriae NCTC13129.</title>
        <authorList>
            <person name="Cerdeno-Tarraga A.-M."/>
            <person name="Efstratiou A."/>
            <person name="Dover L.G."/>
            <person name="Holden M.T.G."/>
            <person name="Pallen M.J."/>
            <person name="Bentley S.D."/>
            <person name="Besra G.S."/>
            <person name="Churcher C.M."/>
            <person name="James K.D."/>
            <person name="De Zoysa A."/>
            <person name="Chillingworth T."/>
            <person name="Cronin A."/>
            <person name="Dowd L."/>
            <person name="Feltwell T."/>
            <person name="Hamlin N."/>
            <person name="Holroyd S."/>
            <person name="Jagels K."/>
            <person name="Moule S."/>
            <person name="Quail M.A."/>
            <person name="Rabbinowitsch E."/>
            <person name="Rutherford K.M."/>
            <person name="Thomson N.R."/>
            <person name="Unwin L."/>
            <person name="Whitehead S."/>
            <person name="Barrell B.G."/>
            <person name="Parkhill J."/>
        </authorList>
    </citation>
    <scope>NUCLEOTIDE SEQUENCE [LARGE SCALE GENOMIC DNA]</scope>
    <source>
        <strain>ATCC 700971 / NCTC 13129 / Biotype gravis</strain>
    </source>
</reference>
<dbReference type="EMBL" id="BX248355">
    <property type="protein sequence ID" value="CAE48984.1"/>
    <property type="molecule type" value="Genomic_DNA"/>
</dbReference>
<dbReference type="RefSeq" id="WP_004566729.1">
    <property type="nucleotide sequence ID" value="NC_002935.2"/>
</dbReference>
<dbReference type="SMR" id="Q6NJD0"/>
<dbReference type="STRING" id="257309.DIP0478"/>
<dbReference type="GeneID" id="29423141"/>
<dbReference type="KEGG" id="cdi:DIP0478"/>
<dbReference type="HOGENOM" id="CLU_083987_3_2_11"/>
<dbReference type="Proteomes" id="UP000002198">
    <property type="component" value="Chromosome"/>
</dbReference>
<dbReference type="GO" id="GO:0022625">
    <property type="term" value="C:cytosolic large ribosomal subunit"/>
    <property type="evidence" value="ECO:0007669"/>
    <property type="project" value="TreeGrafter"/>
</dbReference>
<dbReference type="GO" id="GO:0019843">
    <property type="term" value="F:rRNA binding"/>
    <property type="evidence" value="ECO:0007669"/>
    <property type="project" value="UniProtKB-UniRule"/>
</dbReference>
<dbReference type="GO" id="GO:0003735">
    <property type="term" value="F:structural constituent of ribosome"/>
    <property type="evidence" value="ECO:0007669"/>
    <property type="project" value="InterPro"/>
</dbReference>
<dbReference type="GO" id="GO:0006412">
    <property type="term" value="P:translation"/>
    <property type="evidence" value="ECO:0007669"/>
    <property type="project" value="UniProtKB-UniRule"/>
</dbReference>
<dbReference type="CDD" id="cd00336">
    <property type="entry name" value="Ribosomal_L22"/>
    <property type="match status" value="1"/>
</dbReference>
<dbReference type="FunFam" id="3.90.470.10:FF:000002">
    <property type="entry name" value="50S ribosomal protein L22"/>
    <property type="match status" value="1"/>
</dbReference>
<dbReference type="Gene3D" id="3.90.470.10">
    <property type="entry name" value="Ribosomal protein L22/L17"/>
    <property type="match status" value="1"/>
</dbReference>
<dbReference type="HAMAP" id="MF_01331_B">
    <property type="entry name" value="Ribosomal_uL22_B"/>
    <property type="match status" value="1"/>
</dbReference>
<dbReference type="InterPro" id="IPR001063">
    <property type="entry name" value="Ribosomal_uL22"/>
</dbReference>
<dbReference type="InterPro" id="IPR005727">
    <property type="entry name" value="Ribosomal_uL22_bac/chlpt-type"/>
</dbReference>
<dbReference type="InterPro" id="IPR047867">
    <property type="entry name" value="Ribosomal_uL22_bac/org-type"/>
</dbReference>
<dbReference type="InterPro" id="IPR018260">
    <property type="entry name" value="Ribosomal_uL22_CS"/>
</dbReference>
<dbReference type="InterPro" id="IPR036394">
    <property type="entry name" value="Ribosomal_uL22_sf"/>
</dbReference>
<dbReference type="NCBIfam" id="TIGR01044">
    <property type="entry name" value="rplV_bact"/>
    <property type="match status" value="1"/>
</dbReference>
<dbReference type="PANTHER" id="PTHR13501">
    <property type="entry name" value="CHLOROPLAST 50S RIBOSOMAL PROTEIN L22-RELATED"/>
    <property type="match status" value="1"/>
</dbReference>
<dbReference type="PANTHER" id="PTHR13501:SF8">
    <property type="entry name" value="LARGE RIBOSOMAL SUBUNIT PROTEIN UL22M"/>
    <property type="match status" value="1"/>
</dbReference>
<dbReference type="Pfam" id="PF00237">
    <property type="entry name" value="Ribosomal_L22"/>
    <property type="match status" value="1"/>
</dbReference>
<dbReference type="SUPFAM" id="SSF54843">
    <property type="entry name" value="Ribosomal protein L22"/>
    <property type="match status" value="1"/>
</dbReference>
<dbReference type="PROSITE" id="PS00464">
    <property type="entry name" value="RIBOSOMAL_L22"/>
    <property type="match status" value="1"/>
</dbReference>
<protein>
    <recommendedName>
        <fullName evidence="1">Large ribosomal subunit protein uL22</fullName>
    </recommendedName>
    <alternativeName>
        <fullName evidence="2">50S ribosomal protein L22</fullName>
    </alternativeName>
</protein>
<organism>
    <name type="scientific">Corynebacterium diphtheriae (strain ATCC 700971 / NCTC 13129 / Biotype gravis)</name>
    <dbReference type="NCBI Taxonomy" id="257309"/>
    <lineage>
        <taxon>Bacteria</taxon>
        <taxon>Bacillati</taxon>
        <taxon>Actinomycetota</taxon>
        <taxon>Actinomycetes</taxon>
        <taxon>Mycobacteriales</taxon>
        <taxon>Corynebacteriaceae</taxon>
        <taxon>Corynebacterium</taxon>
    </lineage>
</organism>
<evidence type="ECO:0000255" key="1">
    <source>
        <dbReference type="HAMAP-Rule" id="MF_01331"/>
    </source>
</evidence>
<evidence type="ECO:0000305" key="2"/>
<sequence length="120" mass="13055">MSEAITSARATARFVRVSPMKARRVIDLVRGKSVEEALAILKYAPQAASEPVAKVVASAAANAENNFGLDRRSLVVSEAFADEGPTMRRFSPRAQGRAFQIRKRTSHITIVVESQKEGAK</sequence>
<proteinExistence type="inferred from homology"/>
<gene>
    <name evidence="1" type="primary">rplV</name>
    <name type="ordered locus">DIP0478</name>
</gene>
<comment type="function">
    <text evidence="1">This protein binds specifically to 23S rRNA; its binding is stimulated by other ribosomal proteins, e.g. L4, L17, and L20. It is important during the early stages of 50S assembly. It makes multiple contacts with different domains of the 23S rRNA in the assembled 50S subunit and ribosome (By similarity).</text>
</comment>
<comment type="function">
    <text evidence="1">The globular domain of the protein is located near the polypeptide exit tunnel on the outside of the subunit, while an extended beta-hairpin is found that lines the wall of the exit tunnel in the center of the 70S ribosome.</text>
</comment>
<comment type="subunit">
    <text evidence="1">Part of the 50S ribosomal subunit.</text>
</comment>
<comment type="similarity">
    <text evidence="1">Belongs to the universal ribosomal protein uL22 family.</text>
</comment>
<accession>Q6NJD0</accession>
<name>RL22_CORDI</name>
<feature type="chain" id="PRO_0000125147" description="Large ribosomal subunit protein uL22">
    <location>
        <begin position="1"/>
        <end position="120"/>
    </location>
</feature>
<keyword id="KW-1185">Reference proteome</keyword>
<keyword id="KW-0687">Ribonucleoprotein</keyword>
<keyword id="KW-0689">Ribosomal protein</keyword>
<keyword id="KW-0694">RNA-binding</keyword>
<keyword id="KW-0699">rRNA-binding</keyword>